<accession>P00438</accession>
<reference key="1">
    <citation type="journal article" date="1992" name="Eur. J. Biochem.">
        <title>Substitution of Arg214 at the substrate-binding site of p-hydroxybenzoate hydroxylase from Pseudomonas fluorescens.</title>
        <authorList>
            <person name="van Berkel W."/>
            <person name="Westphal A."/>
            <person name="Eschrich K."/>
            <person name="Eppink M."/>
            <person name="de Kok A."/>
        </authorList>
    </citation>
    <scope>NUCLEOTIDE SEQUENCE [GENOMIC DNA]</scope>
    <scope>FUNCTION</scope>
    <scope>CATALYTIC ACTIVITY</scope>
    <scope>MUTAGENESIS OF CYS-116 AND ARG-214</scope>
    <scope>BIOPHYSICOCHEMICAL PROPERTIES</scope>
    <scope>COFACTOR</scope>
</reference>
<reference key="2">
    <citation type="journal article" date="1982" name="Biochim. Biophys. Acta">
        <title>Primary structure of p-hydroxybenzoate hydroxylase from Pseudomonas fluorescens.</title>
        <authorList>
            <person name="Weijer W.J."/>
            <person name="Hofsteenge J."/>
            <person name="Vereijken J.M."/>
            <person name="Jekel P.A."/>
            <person name="Beintema J.J."/>
        </authorList>
    </citation>
    <scope>PROTEIN SEQUENCE</scope>
</reference>
<reference key="3">
    <citation type="journal article" date="1980" name="Eur. J. Biochem.">
        <title>Primary and tertiary structure studies of p-hydroxybenzoate hydroxylase from Pseudomonas fluorescens. Isolation and alignment of the CNBr peptides; interactions of the protein with flavin adenine dinucleotide.</title>
        <authorList>
            <person name="Hofsteenge J."/>
            <person name="Vereijken J.M."/>
            <person name="Weijer W.J."/>
            <person name="Beintema J.J."/>
            <person name="Wierenga R.K."/>
            <person name="Drenth J."/>
        </authorList>
    </citation>
    <scope>PROTEIN SEQUENCE OF 111-138 AND 270-280</scope>
</reference>
<reference key="4">
    <citation type="journal article" date="1980" name="Eur. J. Biochem.">
        <title>The amino-acid sequence of the three smallest CNBr peptides from p-hydroxybenzoate hydroxylase from Pseudomonas fluorescens.</title>
        <authorList>
            <person name="Vereijken J.M."/>
            <person name="Hofsteenge J."/>
            <person name="Bak H.J."/>
            <person name="Beintema J.J."/>
        </authorList>
    </citation>
    <scope>PROTEIN SEQUENCE OF 1-52; 53-65 AND 66-110</scope>
</reference>
<reference key="5">
    <citation type="journal article" date="1983" name="Eur. J. Biochem.">
        <title>p-hydroxybenzoate hydroxylase from Pseudomonas fluorescens. 1. Completion of the elucidation of the primary structure.</title>
        <authorList>
            <person name="Hofsteenge J."/>
            <person name="Weijer W.J."/>
            <person name="Jekel P.A."/>
            <person name="Beintema J.J."/>
        </authorList>
    </citation>
    <scope>PROTEIN SEQUENCE OF CNBR PEPTIDES AND TERTIARY STRUCTURE</scope>
</reference>
<reference key="6">
    <citation type="journal article" date="1983" name="Eur. J. Biochem.">
        <title>p-hydroxybenzoate hydroxylase from Pseudomonas fluorescens. 2. Fitting of the amino-acid sequence to the tertiary structure.</title>
        <authorList>
            <person name="Weijer W.J."/>
            <person name="Hofsteenge J."/>
            <person name="Beintema J.J."/>
            <person name="Wierenga R.K."/>
            <person name="Drenth J."/>
        </authorList>
    </citation>
    <scope>PROTEIN SEQUENCE OF CNBR PEPTIDES</scope>
    <scope>FAD BINDING SITE</scope>
</reference>
<reference key="7">
    <citation type="journal article" date="1979" name="J. Mol. Biol.">
        <title>Crystal structure of p-hydroxybenzoate hydroxylase.</title>
        <authorList>
            <person name="Wierenga R.K."/>
            <person name="de Jong R.J."/>
            <person name="Kalk K.H."/>
            <person name="Hol W.G.J."/>
            <person name="Drenth J."/>
        </authorList>
    </citation>
    <scope>X-RAY CRYSTALLOGRAPHY (2.5 ANGSTROMS) IN COMPLEX WITH SUBSTRATE AND FAD</scope>
    <scope>SUBUNIT</scope>
</reference>
<reference key="8">
    <citation type="journal article" date="1992" name="Proteins">
        <title>Crystal structure of the reduced form of p-hydroxybenzoate hydroxylase refined at 2.3-A resolution.</title>
        <authorList>
            <person name="Schreuder H.A."/>
            <person name="van der Laan J.M."/>
            <person name="Swarte M.B.A."/>
            <person name="Kalk K.H."/>
            <person name="Hol W.G.J."/>
            <person name="Drenth J."/>
        </authorList>
    </citation>
    <scope>X-RAY CRYSTALLOGRAPHY (2.3 ANGSTROMS) OF REDUCED FORM IN COMPLEX WITH SUBSTRATE AND FAD</scope>
    <scope>COFACTOR</scope>
</reference>
<reference key="9">
    <citation type="journal article" date="1988" name="J. Mol. Biol.">
        <title>Crystal structure of p-hydroxybenzoate hydroxylase complexed with its reaction product 3,4-dihydroxybenzoate.</title>
        <authorList>
            <person name="Schreuder H.A."/>
            <person name="van der Laan J.M."/>
            <person name="Hol W.G."/>
            <person name="Drenth J."/>
        </authorList>
    </citation>
    <scope>X-RAY CRYSTALLOGRAPHY (2.30 ANGSTROMS) IN COMPLEX WITH SUBSTRATE ANALOG AND FAD</scope>
    <scope>FUNCTION</scope>
    <scope>COFACTOR</scope>
    <scope>SUBUNIT</scope>
</reference>
<reference key="10">
    <citation type="journal article" date="1989" name="Biochemistry">
        <title>The coenzyme analogue adenosine 5-diphosphoribose displaces FAD in the active site of p-hydroxybenzoate hydroxylase. An x-ray crystallographic investigation.</title>
        <authorList>
            <person name="van der Laan J.M."/>
            <person name="Schreuder H.A."/>
            <person name="Swarte M.B."/>
            <person name="Wierenga R.K."/>
            <person name="Kalk K.H."/>
            <person name="Hol W.G."/>
            <person name="Drenth J."/>
        </authorList>
    </citation>
    <scope>X-RAY CRYSTALLOGRAPHY (2.70 ANGSTROMS) IN COMPLEX WITH SUBSTRATE AND FAD ANALOG</scope>
    <scope>FUNCTION</scope>
    <scope>COFACTOR</scope>
    <scope>SUBUNIT</scope>
</reference>
<reference key="11">
    <citation type="journal article" date="1989" name="J. Mol. Biol.">
        <title>Crystal structure of the p-hydroxybenzoate hydroxylase-substrate complex refined at 1.9 A resolution. Analysis of the enzyme-substrate and enzyme-product complexes.</title>
        <authorList>
            <person name="Schreuder H.A."/>
            <person name="Prick P.A."/>
            <person name="Wierenga R.K."/>
            <person name="Vriend G."/>
            <person name="Wilson K.S."/>
            <person name="Hol W.G."/>
            <person name="Drenth J."/>
        </authorList>
    </citation>
    <scope>X-RAY CRYSTALLOGRAPHY (1.90 ANGSTROMS) IN COMPLEX WITH SUBSTRATE AND FAD ANALOG</scope>
    <scope>SUBUNIT</scope>
</reference>
<reference key="12">
    <citation type="journal article" date="1994" name="Biochemistry">
        <title>Crystal structures of wild-type p-hydroxybenzoate hydroxylase complexed with 4-aminobenzoate,2,4-dihydroxybenzoate, and 2-hydroxy-4-aminobenzoate and of the Tyr222Ala mutant complexed with 2-hydroxy-4-aminobenzoate. Evidence for a proton channel and a new binding mode of the flavin ring.</title>
        <authorList>
            <person name="Schreuder H.A."/>
            <person name="Mattevi A."/>
            <person name="Obmolova G."/>
            <person name="Kalk K.H."/>
            <person name="Hol W.G."/>
            <person name="van der Bolt F.J."/>
            <person name="van Berkel W.J."/>
        </authorList>
    </citation>
    <scope>X-RAY CRYSTALLOGRAPHY (2.30 ANGSTROMS) OF WILD-TYPE AND MUTANT ALA-222 IN COMPLEX WITH SUBSTRATE ANALOGS AND FAD</scope>
    <scope>FUNCTION</scope>
    <scope>MUTAGENESIS OF TYR-222</scope>
    <scope>SUBUNIT</scope>
</reference>
<reference key="13">
    <citation type="journal article" date="1994" name="Protein Sci.">
        <title>Crystal structure of p-hydroxybenzoate hydroxylase reconstituted with the modified FAD present in alcohol oxidase from methylotrophic yeasts: evidence for an arabinoflavin.</title>
        <authorList>
            <person name="van Berkel W.J."/>
            <person name="Eppink M.H."/>
            <person name="Schreuder H.A."/>
        </authorList>
    </citation>
    <scope>X-RAY CRYSTALLOGRAPHY (2.10 ANGSTROMS) IN COMPLEX WITH SUBSTRATE AND FAD ANALOG</scope>
    <scope>FUNCTION</scope>
    <scope>CATALYTIC ACTIVITY</scope>
    <scope>BIOPHYSICOCHEMICAL PROPERTIES</scope>
    <scope>SUBUNIT</scope>
</reference>
<reference key="14">
    <citation type="journal article" date="1995" name="Eur. J. Biochem.">
        <title>Structure and function of mutant Arg44Lys of 4-hydroxybenzoate hydroxylase implications for NADPH binding.</title>
        <authorList>
            <person name="Eppink M.H."/>
            <person name="Schreuder H.A."/>
            <person name="Van Berkel W.J."/>
        </authorList>
    </citation>
    <scope>X-RAY CRYSTALLOGRAPHY (2.20 ANGSTROMS) OF MUTANT LYS-44 IN COMPLEX WITH SUBSTRATE AND FAD</scope>
    <scope>FUNCTION</scope>
    <scope>CATALYTIC ACTIVITY</scope>
    <scope>MUTAGENESIS OF ARG-44</scope>
    <scope>COFACTOR</scope>
    <scope>SUBUNIT</scope>
</reference>
<reference key="15">
    <citation type="journal article" date="1998" name="Eur. J. Biochem.">
        <title>Lys42 and Ser42 variants of p-hydroxybenzoate hydroxylase from Pseudomonas fluorescens reveal that Arg42 is essential for NADPH binding.</title>
        <authorList>
            <person name="Eppink M.H."/>
            <person name="Schreuder H.A."/>
            <person name="van Berkel W.J."/>
        </authorList>
    </citation>
    <scope>X-RAY CRYSTALLOGRAPHY (2.20 ANGSTROMS) OF MUTANT LYS-42 AND SER-42 IN COMPLEX WITH SUBSTRATE AND FAD</scope>
    <scope>FUNCTION</scope>
    <scope>CATALYTIC ACTIVITY</scope>
    <scope>BIOPHYSICOCHEMICAL PROPERTIES</scope>
    <scope>MUTAGENESIS OF ARG-42</scope>
    <scope>COFACTOR</scope>
    <scope>SUBUNIT</scope>
</reference>
<reference key="16">
    <citation type="journal article" date="1998" name="J. Biol. Chem.">
        <title>Interdomain binding of NADPH in p-hydroxybenzoate hydroxylase as suggested by kinetic, crystallographic and modeling studies of histidine 162 and arginine 269 variants.</title>
        <authorList>
            <person name="Eppink M.H."/>
            <person name="Schreuder H.A."/>
            <person name="van Berkel W.J."/>
        </authorList>
    </citation>
    <scope>X-RAY CRYSTALLOGRAPHY (2.00 ANGSTROMS) OF MUTANTS ARG-162 AND THR-269 IN COMPLEX WITH SUBSTRATE AND FAD</scope>
    <scope>FUNCTION</scope>
    <scope>CATALYTIC ACTIVITY</scope>
    <scope>BIOPHYSICOCHEMICAL PROPERTIES</scope>
    <scope>MUTAGENESIS OF HIS-162 AND ARG-269</scope>
    <scope>COFACTOR</scope>
    <scope>SUBUNIT</scope>
</reference>
<reference key="17">
    <citation type="journal article" date="1999" name="FEBS Lett.">
        <title>Phe161 and Arg166 variants of p-hydroxybenzoate hydroxylase. Implications for NADPH recognition and structural stability.</title>
        <authorList>
            <person name="Eppink M.H."/>
            <person name="Bunthol C."/>
            <person name="Schreuder H.A."/>
            <person name="van Berkel W.J."/>
        </authorList>
    </citation>
    <scope>X-RAY CRYSTALLOGRAPHY (2.00 ANGSTROMS) OF ALA-161 AND SER-166 IN COMPLEX WITH SUBSTRATE AND FAD</scope>
    <scope>FUNCTION</scope>
    <scope>CATALYTIC ACTIVITY</scope>
    <scope>BIOPHYSICOCHEMICAL PROPERTIES</scope>
    <scope>MUTAGENESIS OF PHE-161 AND ARG-166</scope>
    <scope>COFACTOR</scope>
    <scope>SUBUNIT</scope>
</reference>
<reference key="18">
    <citation type="journal article" date="1999" name="J. Mol. Biol.">
        <title>Switch of coenzyme specificity of p-hydroxybenzoate hydroxylase.</title>
        <authorList>
            <person name="Eppink M.H."/>
            <person name="Overkamp K.M."/>
            <person name="Schreuder H.A."/>
            <person name="Van Berkel W.J."/>
        </authorList>
    </citation>
    <scope>X-RAY CRYSTALLOGRAPHY (2.40 ANGSTROMS) OF 1-392 OF MUTANTS ARG-34; THR-34 AND GLU-38 IN COMPLEX WITH SUBSTRATE AND FAD</scope>
    <scope>FUNCTION</scope>
    <scope>CATALYTIC ACTIVITY</scope>
    <scope>BIOPHYSICOCHEMICAL PROPERTIES</scope>
    <scope>MUTAGENESIS OF ARG-33; GLN-34 AND TYR-38</scope>
    <scope>COFACTOR</scope>
    <scope>SUBUNIT</scope>
</reference>
<evidence type="ECO:0000250" key="1">
    <source>
        <dbReference type="UniProtKB" id="P20586"/>
    </source>
</evidence>
<evidence type="ECO:0000269" key="2">
    <source>
    </source>
</evidence>
<evidence type="ECO:0000269" key="3">
    <source>
    </source>
</evidence>
<evidence type="ECO:0000269" key="4">
    <source>
    </source>
</evidence>
<evidence type="ECO:0000269" key="5">
    <source>
    </source>
</evidence>
<evidence type="ECO:0000269" key="6">
    <source>
    </source>
</evidence>
<evidence type="ECO:0000269" key="7">
    <source>
    </source>
</evidence>
<evidence type="ECO:0000269" key="8">
    <source>
    </source>
</evidence>
<evidence type="ECO:0000269" key="9">
    <source>
    </source>
</evidence>
<evidence type="ECO:0000269" key="10">
    <source>
    </source>
</evidence>
<evidence type="ECO:0000269" key="11">
    <source>
    </source>
</evidence>
<evidence type="ECO:0000269" key="12">
    <source>
    </source>
</evidence>
<evidence type="ECO:0000269" key="13">
    <source>
    </source>
</evidence>
<evidence type="ECO:0000269" key="14">
    <source>
    </source>
</evidence>
<evidence type="ECO:0000303" key="15">
    <source>
    </source>
</evidence>
<evidence type="ECO:0000303" key="16">
    <source>
    </source>
</evidence>
<evidence type="ECO:0000305" key="17"/>
<evidence type="ECO:0007829" key="18">
    <source>
        <dbReference type="PDB" id="1BGN"/>
    </source>
</evidence>
<evidence type="ECO:0007829" key="19">
    <source>
        <dbReference type="PDB" id="1PBE"/>
    </source>
</evidence>
<dbReference type="EC" id="1.14.13.2" evidence="2 3 5 11 12 13 14"/>
<dbReference type="EMBL" id="X68438">
    <property type="protein sequence ID" value="CAA48483.1"/>
    <property type="molecule type" value="Genomic_DNA"/>
</dbReference>
<dbReference type="PIR" id="A90643">
    <property type="entry name" value="WHPSBF"/>
</dbReference>
<dbReference type="PDB" id="1BF3">
    <property type="method" value="X-ray"/>
    <property type="resolution" value="2.20 A"/>
    <property type="chains" value="A=1-394"/>
</dbReference>
<dbReference type="PDB" id="1BGJ">
    <property type="method" value="X-ray"/>
    <property type="resolution" value="3.00 A"/>
    <property type="chains" value="A=1-394"/>
</dbReference>
<dbReference type="PDB" id="1BGN">
    <property type="method" value="X-ray"/>
    <property type="resolution" value="2.00 A"/>
    <property type="chains" value="A=1-394"/>
</dbReference>
<dbReference type="PDB" id="1BKW">
    <property type="method" value="X-ray"/>
    <property type="resolution" value="2.20 A"/>
    <property type="chains" value="A=1-394"/>
</dbReference>
<dbReference type="PDB" id="1CC4">
    <property type="method" value="X-ray"/>
    <property type="resolution" value="2.00 A"/>
    <property type="chains" value="A=1-394"/>
</dbReference>
<dbReference type="PDB" id="1CC6">
    <property type="method" value="X-ray"/>
    <property type="resolution" value="2.20 A"/>
    <property type="chains" value="A=1-394"/>
</dbReference>
<dbReference type="PDB" id="1CJ2">
    <property type="method" value="X-ray"/>
    <property type="resolution" value="2.80 A"/>
    <property type="chains" value="A=1-391"/>
</dbReference>
<dbReference type="PDB" id="1CJ3">
    <property type="method" value="X-ray"/>
    <property type="resolution" value="2.50 A"/>
    <property type="chains" value="A=1-392"/>
</dbReference>
<dbReference type="PDB" id="1CJ4">
    <property type="method" value="X-ray"/>
    <property type="resolution" value="2.40 A"/>
    <property type="chains" value="A=1-392"/>
</dbReference>
<dbReference type="PDB" id="1PBB">
    <property type="method" value="X-ray"/>
    <property type="resolution" value="2.50 A"/>
    <property type="chains" value="A=1-394"/>
</dbReference>
<dbReference type="PDB" id="1PBC">
    <property type="method" value="X-ray"/>
    <property type="resolution" value="2.80 A"/>
    <property type="chains" value="A=1-394"/>
</dbReference>
<dbReference type="PDB" id="1PBD">
    <property type="method" value="X-ray"/>
    <property type="resolution" value="2.30 A"/>
    <property type="chains" value="A=1-394"/>
</dbReference>
<dbReference type="PDB" id="1PBE">
    <property type="method" value="X-ray"/>
    <property type="resolution" value="1.90 A"/>
    <property type="chains" value="A=1-394"/>
</dbReference>
<dbReference type="PDB" id="1PBF">
    <property type="method" value="X-ray"/>
    <property type="resolution" value="2.70 A"/>
    <property type="chains" value="A=1-394"/>
</dbReference>
<dbReference type="PDB" id="1PDH">
    <property type="method" value="X-ray"/>
    <property type="resolution" value="2.10 A"/>
    <property type="chains" value="A=1-394"/>
</dbReference>
<dbReference type="PDB" id="1PHH">
    <property type="method" value="X-ray"/>
    <property type="resolution" value="2.30 A"/>
    <property type="chains" value="A=1-394"/>
</dbReference>
<dbReference type="PDB" id="2PHH">
    <property type="method" value="X-ray"/>
    <property type="resolution" value="2.70 A"/>
    <property type="chains" value="A=1-394"/>
</dbReference>
<dbReference type="PDBsum" id="1BF3"/>
<dbReference type="PDBsum" id="1BGJ"/>
<dbReference type="PDBsum" id="1BGN"/>
<dbReference type="PDBsum" id="1BKW"/>
<dbReference type="PDBsum" id="1CC4"/>
<dbReference type="PDBsum" id="1CC6"/>
<dbReference type="PDBsum" id="1CJ2"/>
<dbReference type="PDBsum" id="1CJ3"/>
<dbReference type="PDBsum" id="1CJ4"/>
<dbReference type="PDBsum" id="1PBB"/>
<dbReference type="PDBsum" id="1PBC"/>
<dbReference type="PDBsum" id="1PBD"/>
<dbReference type="PDBsum" id="1PBE"/>
<dbReference type="PDBsum" id="1PBF"/>
<dbReference type="PDBsum" id="1PDH"/>
<dbReference type="PDBsum" id="1PHH"/>
<dbReference type="PDBsum" id="2PHH"/>
<dbReference type="SMR" id="P00438"/>
<dbReference type="BindingDB" id="P00438"/>
<dbReference type="ChEMBL" id="CHEMBL3675"/>
<dbReference type="DrugBank" id="DB02839">
    <property type="generic name" value="2,4-Dihydroxybenzoic Acid"/>
</dbReference>
<dbReference type="DrugBank" id="DB04242">
    <property type="generic name" value="4-hydroxybenzoic acid"/>
</dbReference>
<dbReference type="DrugBank" id="DB02059">
    <property type="generic name" value="Adenosine-5-Diphosphoribose"/>
</dbReference>
<dbReference type="DrugBank" id="DB02362">
    <property type="generic name" value="Aminobenzoic acid"/>
</dbReference>
<dbReference type="DrugBank" id="DB03147">
    <property type="generic name" value="Flavin adenine dinucleotide"/>
</dbReference>
<dbReference type="BioCyc" id="MetaCyc:MONOMER-11534"/>
<dbReference type="BRENDA" id="1.14.13.2">
    <property type="organism ID" value="5121"/>
</dbReference>
<dbReference type="UniPathway" id="UPA00156">
    <property type="reaction ID" value="UER00257"/>
</dbReference>
<dbReference type="EvolutionaryTrace" id="P00438"/>
<dbReference type="GO" id="GO:0106356">
    <property type="term" value="F:4-hydroxybenzoate 3-monooxygenase (NADPH) activity"/>
    <property type="evidence" value="ECO:0007669"/>
    <property type="project" value="RHEA"/>
</dbReference>
<dbReference type="GO" id="GO:0018659">
    <property type="term" value="F:4-hydroxybenzoate 3-monooxygenase activity"/>
    <property type="evidence" value="ECO:0000314"/>
    <property type="project" value="UniProtKB"/>
</dbReference>
<dbReference type="GO" id="GO:0071949">
    <property type="term" value="F:FAD binding"/>
    <property type="evidence" value="ECO:0000314"/>
    <property type="project" value="UniProtKB"/>
</dbReference>
<dbReference type="GO" id="GO:0050660">
    <property type="term" value="F:flavin adenine dinucleotide binding"/>
    <property type="evidence" value="ECO:0000314"/>
    <property type="project" value="UniProtKB"/>
</dbReference>
<dbReference type="GO" id="GO:0043640">
    <property type="term" value="P:benzoate catabolic process via hydroxylation"/>
    <property type="evidence" value="ECO:0007669"/>
    <property type="project" value="UniProtKB-UniPathway"/>
</dbReference>
<dbReference type="Gene3D" id="3.30.9.10">
    <property type="entry name" value="D-Amino Acid Oxidase, subunit A, domain 2"/>
    <property type="match status" value="1"/>
</dbReference>
<dbReference type="Gene3D" id="3.50.50.60">
    <property type="entry name" value="FAD/NAD(P)-binding domain"/>
    <property type="match status" value="1"/>
</dbReference>
<dbReference type="InterPro" id="IPR002938">
    <property type="entry name" value="FAD-bd"/>
</dbReference>
<dbReference type="InterPro" id="IPR036188">
    <property type="entry name" value="FAD/NAD-bd_sf"/>
</dbReference>
<dbReference type="InterPro" id="IPR012733">
    <property type="entry name" value="HB_mOase"/>
</dbReference>
<dbReference type="InterPro" id="IPR050641">
    <property type="entry name" value="RIFMO-like"/>
</dbReference>
<dbReference type="NCBIfam" id="TIGR02360">
    <property type="entry name" value="pbenz_hydroxyl"/>
    <property type="match status" value="1"/>
</dbReference>
<dbReference type="NCBIfam" id="NF006091">
    <property type="entry name" value="PRK08243.1"/>
    <property type="match status" value="1"/>
</dbReference>
<dbReference type="PANTHER" id="PTHR43004:SF3">
    <property type="entry name" value="P-HYDROXYBENZOATE HYDROXYLASE"/>
    <property type="match status" value="1"/>
</dbReference>
<dbReference type="PANTHER" id="PTHR43004">
    <property type="entry name" value="TRK SYSTEM POTASSIUM UPTAKE PROTEIN"/>
    <property type="match status" value="1"/>
</dbReference>
<dbReference type="Pfam" id="PF01494">
    <property type="entry name" value="FAD_binding_3"/>
    <property type="match status" value="1"/>
</dbReference>
<dbReference type="PRINTS" id="PR00420">
    <property type="entry name" value="RNGMNOXGNASE"/>
</dbReference>
<dbReference type="SUPFAM" id="SSF54373">
    <property type="entry name" value="FAD-linked reductases, C-terminal domain"/>
    <property type="match status" value="1"/>
</dbReference>
<dbReference type="SUPFAM" id="SSF51905">
    <property type="entry name" value="FAD/NAD(P)-binding domain"/>
    <property type="match status" value="1"/>
</dbReference>
<feature type="chain" id="PRO_0000058382" description="p-hydroxybenzoate hydroxylase">
    <location>
        <begin position="1"/>
        <end position="394"/>
    </location>
</feature>
<feature type="binding site" evidence="2 3 6 7 8 10 11 12 13 14">
    <location>
        <position position="13"/>
    </location>
    <ligand>
        <name>FAD</name>
        <dbReference type="ChEBI" id="CHEBI:57692"/>
    </ligand>
</feature>
<feature type="binding site" evidence="2 3 6 7 8 10 11 12 13 14">
    <location>
        <position position="32"/>
    </location>
    <ligand>
        <name>FAD</name>
        <dbReference type="ChEBI" id="CHEBI:57692"/>
    </ligand>
</feature>
<feature type="binding site" evidence="2 3 6 7 8 10 11 12 13 14">
    <location>
        <begin position="42"/>
        <end position="47"/>
    </location>
    <ligand>
        <name>FAD</name>
        <dbReference type="ChEBI" id="CHEBI:57692"/>
    </ligand>
</feature>
<feature type="binding site" evidence="2 3 6 7 8 10 11 12 13 14">
    <location>
        <position position="102"/>
    </location>
    <ligand>
        <name>FAD</name>
        <dbReference type="ChEBI" id="CHEBI:57692"/>
    </ligand>
</feature>
<feature type="binding site" evidence="2 3 6 7 8 10 11 12 13 14">
    <location>
        <position position="201"/>
    </location>
    <ligand>
        <name>substrate</name>
    </ligand>
</feature>
<feature type="binding site" evidence="2 3 6 7 8 10 11 12 13 14">
    <location>
        <begin position="212"/>
        <end position="214"/>
    </location>
    <ligand>
        <name>substrate</name>
    </ligand>
</feature>
<feature type="binding site" evidence="2 3 6 7 8 10 11 12 13 14">
    <location>
        <position position="222"/>
    </location>
    <ligand>
        <name>substrate</name>
    </ligand>
</feature>
<feature type="binding site" evidence="2 3 6 7 8 10 11 12 13 14">
    <location>
        <position position="286"/>
    </location>
    <ligand>
        <name>FAD</name>
        <dbReference type="ChEBI" id="CHEBI:57692"/>
    </ligand>
</feature>
<feature type="binding site" evidence="2 3 6 7 8 10 11 12 13 14">
    <location>
        <position position="293"/>
    </location>
    <ligand>
        <name>substrate</name>
    </ligand>
</feature>
<feature type="binding site" evidence="2 3 6 7 8 10 11 12 13 14">
    <location>
        <begin position="299"/>
        <end position="300"/>
    </location>
    <ligand>
        <name>FAD</name>
        <dbReference type="ChEBI" id="CHEBI:57692"/>
    </ligand>
</feature>
<feature type="site" description="Important for catalytic activity" evidence="1">
    <location>
        <position position="201"/>
    </location>
</feature>
<feature type="site" description="Important for catalytic activity" evidence="1">
    <location>
        <position position="385"/>
    </location>
</feature>
<feature type="mutagenesis site" description="Slight decrease of affinity for p-OHB and strong decrease of affinity for NADPH." evidence="3">
    <original>R</original>
    <variation>E</variation>
    <location>
        <position position="33"/>
    </location>
</feature>
<feature type="mutagenesis site" description="Slight decrease of affinity for p-OHB and NADPH." evidence="3">
    <original>R</original>
    <variation>K</variation>
    <location>
        <position position="33"/>
    </location>
</feature>
<feature type="mutagenesis site" description="Slight decrease of affinity for p-OHB and strong decrease of affinity for NADPH." evidence="3">
    <original>R</original>
    <variation>S</variation>
    <location>
        <position position="33"/>
    </location>
</feature>
<feature type="mutagenesis site" description="Slight decrease of affinity for p-OHB and NADPH." evidence="3">
    <original>Q</original>
    <variation>K</variation>
    <location>
        <position position="34"/>
    </location>
</feature>
<feature type="mutagenesis site" description="Slight decrease of affinity for p-OHB and NADPH." evidence="3">
    <original>Q</original>
    <variation>R</variation>
    <location>
        <position position="34"/>
    </location>
</feature>
<feature type="mutagenesis site" description="Slight decrease of affinity for p-OHB and NADPH." evidence="3">
    <original>Q</original>
    <variation>T</variation>
    <location>
        <position position="34"/>
    </location>
</feature>
<feature type="mutagenesis site" description="Slight decrease of affinity for p-OHB and strong decrease of affinity for NADPH." evidence="3">
    <original>Y</original>
    <variation>E</variation>
    <location>
        <position position="38"/>
    </location>
</feature>
<feature type="mutagenesis site" description="Slight decrease of affinity for p-OHB and strong decrease of affinity for NADPH." evidence="3">
    <original>Y</original>
    <variation>F</variation>
    <location>
        <position position="38"/>
    </location>
</feature>
<feature type="mutagenesis site" description="Slight decrease of affinity for p-OHB and strong decrease of affinity for NADPH." evidence="3">
    <original>Y</original>
    <variation>K</variation>
    <location>
        <position position="38"/>
    </location>
</feature>
<feature type="mutagenesis site" description="4-fold and 10-fold decrease of affinity for p-OHB and NADPH, respectively. The turnover rate of p-hydroxybenzoate hydroxylase results from impaired binding of NADPH." evidence="13">
    <original>R</original>
    <variation>K</variation>
    <location>
        <position position="42"/>
    </location>
</feature>
<feature type="mutagenesis site" description="3-fold and 10-fold decrease of affinity for p-OHB and NADPH, respectively. The turnover rate of p-hydroxybenzoate hydroxylase results from impaired binding of NADPH. Hardly disturbs the binding of FAD." evidence="13">
    <original>R</original>
    <variation>S</variation>
    <location>
        <position position="42"/>
    </location>
</feature>
<feature type="mutagenesis site" description="Decrease of affinity for the flavin prosthetic group. It affects NADPH binding, resulting in a low yield of the charge-transfer species between reduced flavin and NADP." evidence="11">
    <original>R</original>
    <variation>K</variation>
    <location>
        <position position="44"/>
    </location>
</feature>
<feature type="mutagenesis site" description="Slight decrease of affinity for NADPH and p-OHB are observed." evidence="5">
    <original>C</original>
    <variation>S</variation>
    <location>
        <position position="116"/>
    </location>
</feature>
<feature type="mutagenesis site" description="Decrease of affinity for NADPH." evidence="2">
    <original>F</original>
    <variation>A</variation>
    <location>
        <position position="161"/>
    </location>
</feature>
<feature type="mutagenesis site" description="Decrease of affinity for NADPH." evidence="2">
    <original>F</original>
    <variation>G</variation>
    <location>
        <position position="161"/>
    </location>
</feature>
<feature type="mutagenesis site" description="No significant changes in affinity for p-OHB are observed. However, the affinity for NADPH decreases strongly." evidence="14">
    <original>H</original>
    <variation>D</variation>
    <location>
        <position position="162"/>
    </location>
</feature>
<feature type="mutagenesis site" description="No significant changes in affinity for p-OHB are observed. However, the affinity for NADPH decreases slightly." evidence="14">
    <original>H</original>
    <variation>K</variation>
    <location>
        <position position="162"/>
    </location>
</feature>
<feature type="mutagenesis site" description="No significant changes in affinity for p-OHB are observed. However, the affinity for NADPH decreases strongly." evidence="14">
    <original>H</original>
    <variation>N</variation>
    <location>
        <position position="162"/>
    </location>
</feature>
<feature type="mutagenesis site" description="No significant changes in affinity for p-OHB are observed. However, the affinity for NADPH decreases slightly." evidence="14">
    <original>H</original>
    <variation>R</variation>
    <location>
        <position position="162"/>
    </location>
</feature>
<feature type="mutagenesis site" description="No significant changes in affinity for p-OHB are observed. However, the affinity for NADPH decreases strongly." evidence="14">
    <original>H</original>
    <variation>S</variation>
    <location>
        <position position="162"/>
    </location>
</feature>
<feature type="mutagenesis site" description="No significant changes in affinity for p-OHB are observed. However, the affinity for NADPH decreases strongly." evidence="14">
    <original>H</original>
    <variation>T</variation>
    <location>
        <position position="162"/>
    </location>
</feature>
<feature type="mutagenesis site" description="No significant changes in affinity for p-OHB are observed. However, the affinity for NADPH decreases slightly." evidence="14">
    <original>H</original>
    <variation>Y</variation>
    <location>
        <position position="162"/>
    </location>
</feature>
<feature type="mutagenesis site" description="Loses the ability to bind NADPH and FAD." evidence="2">
    <original>R</original>
    <variation>E</variation>
    <location>
        <position position="166"/>
    </location>
</feature>
<feature type="mutagenesis site" description="Loses the ability to bind NADPH." evidence="2">
    <original>R</original>
    <variation>K</variation>
    <location>
        <position position="166"/>
    </location>
</feature>
<feature type="mutagenesis site" description="Loses the ability to bind NADPH." evidence="2">
    <original>R</original>
    <variation>S</variation>
    <location>
        <position position="166"/>
    </location>
</feature>
<feature type="mutagenesis site" description="Strong decrease of affinity for NADPH and 4-fold decrease of affinity for p-OHB are observed." evidence="5">
    <original>R</original>
    <variation>K</variation>
    <location>
        <position position="214"/>
    </location>
</feature>
<feature type="mutagenesis site" description="Results in the removal of a large side chain involving in the binding of the carboxyl group of the substrate." evidence="10">
    <original>Y</original>
    <variation>A</variation>
    <location>
        <position position="222"/>
    </location>
</feature>
<feature type="mutagenesis site" description="No significant changes in affinity for p-OHB are observed. However, the affinity for NADPH decreases strongly." evidence="14">
    <original>R</original>
    <variation>D</variation>
    <location>
        <position position="269"/>
    </location>
</feature>
<feature type="mutagenesis site" description="No significant changes in affinity for p-OHB are observed. However, the affinity for NADPH decreases slightly." evidence="14">
    <original>R</original>
    <variation>K</variation>
    <location>
        <position position="269"/>
    </location>
</feature>
<feature type="mutagenesis site" description="No significant changes in affinity for p-OHB are observed. However, the affinity for NADPH decreases strongly." evidence="14">
    <original>R</original>
    <variation>N</variation>
    <location>
        <position position="269"/>
    </location>
</feature>
<feature type="mutagenesis site" description="No significant changes in affinity for p-OHB are observed. However, the affinity for NADPH decreases slightly." evidence="14">
    <original>R</original>
    <variation>S</variation>
    <location>
        <position position="269"/>
    </location>
</feature>
<feature type="mutagenesis site" description="No significant changes in affinity for p-OHB are observed. However, the affinity for NADPH decreases strongly." evidence="14">
    <original>R</original>
    <variation>T</variation>
    <location>
        <position position="269"/>
    </location>
</feature>
<feature type="mutagenesis site" description="No significant changes in affinity for p-OHB are observed. However, the affinity for NADPH decreases strongly." evidence="14">
    <original>R</original>
    <variation>Y</variation>
    <location>
        <position position="269"/>
    </location>
</feature>
<feature type="sequence conflict" description="In Ref. 2; AA sequence." evidence="17" ref="2">
    <original>W</original>
    <variation>Y</variation>
    <location>
        <position position="344"/>
    </location>
</feature>
<feature type="strand" evidence="19">
    <location>
        <begin position="4"/>
        <end position="8"/>
    </location>
</feature>
<feature type="helix" evidence="19">
    <location>
        <begin position="12"/>
        <end position="23"/>
    </location>
</feature>
<feature type="strand" evidence="19">
    <location>
        <begin position="28"/>
        <end position="31"/>
    </location>
</feature>
<feature type="helix" evidence="19">
    <location>
        <begin position="36"/>
        <end position="40"/>
    </location>
</feature>
<feature type="strand" evidence="19">
    <location>
        <begin position="47"/>
        <end position="49"/>
    </location>
</feature>
<feature type="helix" evidence="19">
    <location>
        <begin position="50"/>
        <end position="58"/>
    </location>
</feature>
<feature type="helix" evidence="19">
    <location>
        <begin position="63"/>
        <end position="68"/>
    </location>
</feature>
<feature type="strand" evidence="19">
    <location>
        <begin position="70"/>
        <end position="79"/>
    </location>
</feature>
<feature type="strand" evidence="19">
    <location>
        <begin position="82"/>
        <end position="87"/>
    </location>
</feature>
<feature type="helix" evidence="19">
    <location>
        <begin position="88"/>
        <end position="91"/>
    </location>
</feature>
<feature type="strand" evidence="19">
    <location>
        <begin position="97"/>
        <end position="99"/>
    </location>
</feature>
<feature type="helix" evidence="19">
    <location>
        <begin position="102"/>
        <end position="116"/>
    </location>
</feature>
<feature type="strand" evidence="19">
    <location>
        <begin position="119"/>
        <end position="121"/>
    </location>
</feature>
<feature type="strand" evidence="19">
    <location>
        <begin position="125"/>
        <end position="130"/>
    </location>
</feature>
<feature type="strand" evidence="19">
    <location>
        <begin position="134"/>
        <end position="136"/>
    </location>
</feature>
<feature type="strand" evidence="19">
    <location>
        <begin position="138"/>
        <end position="143"/>
    </location>
</feature>
<feature type="strand" evidence="19">
    <location>
        <begin position="146"/>
        <end position="151"/>
    </location>
</feature>
<feature type="strand" evidence="19">
    <location>
        <begin position="153"/>
        <end position="157"/>
    </location>
</feature>
<feature type="helix" evidence="19">
    <location>
        <begin position="164"/>
        <end position="167"/>
    </location>
</feature>
<feature type="helix" evidence="19">
    <location>
        <begin position="171"/>
        <end position="173"/>
    </location>
</feature>
<feature type="strand" evidence="19">
    <location>
        <begin position="175"/>
        <end position="192"/>
    </location>
</feature>
<feature type="strand" evidence="18">
    <location>
        <begin position="195"/>
        <end position="198"/>
    </location>
</feature>
<feature type="strand" evidence="19">
    <location>
        <begin position="200"/>
        <end position="203"/>
    </location>
</feature>
<feature type="strand" evidence="19">
    <location>
        <begin position="209"/>
        <end position="215"/>
    </location>
</feature>
<feature type="strand" evidence="19">
    <location>
        <begin position="218"/>
        <end position="225"/>
    </location>
</feature>
<feature type="helix" evidence="19">
    <location>
        <begin position="231"/>
        <end position="233"/>
    </location>
</feature>
<feature type="helix" evidence="19">
    <location>
        <begin position="236"/>
        <end position="246"/>
    </location>
</feature>
<feature type="helix" evidence="19">
    <location>
        <begin position="249"/>
        <end position="254"/>
    </location>
</feature>
<feature type="strand" evidence="19">
    <location>
        <begin position="260"/>
        <end position="278"/>
    </location>
</feature>
<feature type="strand" evidence="19">
    <location>
        <begin position="281"/>
        <end position="283"/>
    </location>
</feature>
<feature type="helix" evidence="19">
    <location>
        <begin position="285"/>
        <end position="287"/>
    </location>
</feature>
<feature type="helix" evidence="19">
    <location>
        <begin position="293"/>
        <end position="295"/>
    </location>
</feature>
<feature type="helix" evidence="19">
    <location>
        <begin position="298"/>
        <end position="318"/>
    </location>
</feature>
<feature type="helix" evidence="19">
    <location>
        <begin position="322"/>
        <end position="327"/>
    </location>
</feature>
<feature type="helix" evidence="19">
    <location>
        <begin position="328"/>
        <end position="350"/>
    </location>
</feature>
<feature type="helix" evidence="19">
    <location>
        <begin position="358"/>
        <end position="371"/>
    </location>
</feature>
<feature type="helix" evidence="19">
    <location>
        <begin position="375"/>
        <end position="386"/>
    </location>
</feature>
<proteinExistence type="evidence at protein level"/>
<gene>
    <name type="primary">pobA</name>
</gene>
<name>PHHY_PSEFL</name>
<comment type="function">
    <text evidence="2 3 5 7 8 10 11 12 13 14">Catalyzes the incorporation of an atom of dioxygen into p-hydroxybenzoate (p-OHB) to form 3,4-dihydroxybenzoate (3,4DOHB). The reaction occurs in two parts: reduction of the flavin adenine dinucleotide (FAD) in the enzyme by reduced nicotinamide adenine dinucleotide phosphate (NADPH) in response to binding p-hydroxybenzoate to the enzyme and oxidation of reduced FAD with oxygen to form a hydroperoxide, which then oxygenates p-hydroxybenzoate.</text>
</comment>
<comment type="catalytic activity">
    <reaction evidence="2 3 5 11 12 13 14">
        <text>4-hydroxybenzoate + NADPH + O2 + H(+) = 3,4-dihydroxybenzoate + NADP(+) + H2O</text>
        <dbReference type="Rhea" id="RHEA:19477"/>
        <dbReference type="ChEBI" id="CHEBI:15377"/>
        <dbReference type="ChEBI" id="CHEBI:15378"/>
        <dbReference type="ChEBI" id="CHEBI:15379"/>
        <dbReference type="ChEBI" id="CHEBI:17879"/>
        <dbReference type="ChEBI" id="CHEBI:36241"/>
        <dbReference type="ChEBI" id="CHEBI:57783"/>
        <dbReference type="ChEBI" id="CHEBI:58349"/>
        <dbReference type="EC" id="1.14.13.2"/>
    </reaction>
</comment>
<comment type="cofactor">
    <cofactor evidence="2 3 4 5 7 8 11 13 14">
        <name>FAD</name>
        <dbReference type="ChEBI" id="CHEBI:57692"/>
    </cofactor>
    <text evidence="2 3 7 8 11 13 14">Binds 1 FAD per subunit.</text>
</comment>
<comment type="biophysicochemical properties">
    <kinetics>
        <KM evidence="13">15 uM for p-OHB</KM>
        <KM evidence="2 3">15 uM for p-OHB (at pH 6)</KM>
        <KM evidence="12 14">20 uM for p-OHB</KM>
        <KM evidence="5">25 uM for p-OHB (at 25 degrees Celsius)</KM>
        <KM evidence="14">30 uM for NADPH</KM>
        <KM evidence="5">30 uM for p-OHB (at 6 degrees Celsius)</KM>
        <KM evidence="2 3">34 uM for NADPH (at pH 6)</KM>
        <KM evidence="5">40 uM for NADPH (at 6 degrees Celsius)</KM>
        <KM evidence="5">50 uM for NADPH (at 25 degrees Celsius)</KM>
        <KM evidence="13">50 uM for NADPH</KM>
        <KM evidence="12">70 uM for NADPH</KM>
        <text evidence="2 3 5 12 13 14">kcat is 55 sec(-1) for hydroxylase activity (PubMed:9578477, PubMed:9694855). kcat is 55 sec(-1) for hydroxylase activity (at 25 degrees Celsius) (PubMed:1459126). kcat is 55 sec(-1) for hydroxylase activity (at pH 8) (PubMed:10025942, PubMed:10493859). kcat is 9 sec(-1) for hydroxylase activity (at 6 degrees Celsius) (PubMed:1459126).</text>
    </kinetics>
</comment>
<comment type="pathway">
    <text evidence="17">Aromatic compound metabolism; benzoate degradation via hydroxylation; 3,4-dihydroxybenzoate from benzoate: step 2/2.</text>
</comment>
<comment type="subunit">
    <text evidence="2 3 6 7 8 9 10 11 12 13 14">Homodimer.</text>
</comment>
<comment type="similarity">
    <text evidence="17">Belongs to the aromatic-ring hydroxylase family.</text>
</comment>
<sequence>MKTQVAIIGAGPSGLLLGQLLHKAGIDNVILERQTPDYVLGRIRAGVLEQGMVDLLREAGVDRRMARDGLVHEGVEIAFAGQRRRIDLKRLSGGKTVTVYGQTEVTRDLMEAREACGATTVYQAAEVRLHDLQGERPYVTFERDGERLRLDCDYIAGCDGFHGISRQSIPAERLKVFERVYPFGWLGLLADTPPVSHELIYANHPRGFALCSQRSATRSRYYVQVPLTEKVEDWSDERFWTELKARLPAEVAEKLVTGPSLEKSIAPLRSFVVEPMQHGRLFLAGDAAHIVPPTGAKGLNLAASDVSTLYRLLLKAYREGRGELLERYSAICLRRIWKAERFSWWMTSVLHRFPDTDAFSQRIQQTELEYYLGSEAGLATIAENYVGLPYEEIE</sequence>
<protein>
    <recommendedName>
        <fullName evidence="15">p-hydroxybenzoate hydroxylase</fullName>
        <shortName evidence="15">PHBH</shortName>
        <shortName evidence="16">PHBHase</shortName>
        <ecNumber evidence="2 3 5 11 12 13 14">1.14.13.2</ecNumber>
    </recommendedName>
    <alternativeName>
        <fullName evidence="17">4-hydroxybenzoate 3-monooxygenase</fullName>
    </alternativeName>
</protein>
<organism>
    <name type="scientific">Pseudomonas fluorescens</name>
    <dbReference type="NCBI Taxonomy" id="294"/>
    <lineage>
        <taxon>Bacteria</taxon>
        <taxon>Pseudomonadati</taxon>
        <taxon>Pseudomonadota</taxon>
        <taxon>Gammaproteobacteria</taxon>
        <taxon>Pseudomonadales</taxon>
        <taxon>Pseudomonadaceae</taxon>
        <taxon>Pseudomonas</taxon>
    </lineage>
</organism>
<keyword id="KW-0002">3D-structure</keyword>
<keyword id="KW-0058">Aromatic hydrocarbons catabolism</keyword>
<keyword id="KW-0903">Direct protein sequencing</keyword>
<keyword id="KW-0274">FAD</keyword>
<keyword id="KW-0285">Flavoprotein</keyword>
<keyword id="KW-0503">Monooxygenase</keyword>
<keyword id="KW-0521">NADP</keyword>
<keyword id="KW-0560">Oxidoreductase</keyword>